<protein>
    <recommendedName>
        <fullName>Membrane-anchored protein 1</fullName>
    </recommendedName>
</protein>
<accession>Q10268</accession>
<accession>Q9USB5</accession>
<keyword id="KW-0131">Cell cycle</keyword>
<keyword id="KW-0132">Cell division</keyword>
<keyword id="KW-1003">Cell membrane</keyword>
<keyword id="KW-0325">Glycoprotein</keyword>
<keyword id="KW-0472">Membrane</keyword>
<keyword id="KW-0597">Phosphoprotein</keyword>
<keyword id="KW-1185">Reference proteome</keyword>
<keyword id="KW-0732">Signal</keyword>
<keyword id="KW-0812">Transmembrane</keyword>
<keyword id="KW-1133">Transmembrane helix</keyword>
<organism>
    <name type="scientific">Schizosaccharomyces pombe (strain 972 / ATCC 24843)</name>
    <name type="common">Fission yeast</name>
    <dbReference type="NCBI Taxonomy" id="284812"/>
    <lineage>
        <taxon>Eukaryota</taxon>
        <taxon>Fungi</taxon>
        <taxon>Dikarya</taxon>
        <taxon>Ascomycota</taxon>
        <taxon>Taphrinomycotina</taxon>
        <taxon>Schizosaccharomycetes</taxon>
        <taxon>Schizosaccharomycetales</taxon>
        <taxon>Schizosaccharomycetaceae</taxon>
        <taxon>Schizosaccharomyces</taxon>
    </lineage>
</organism>
<reference key="1">
    <citation type="journal article" date="2002" name="Biol. Cell">
        <title>Mac1, a fission yeast transmembrane protein localizing to the poles and septum, is required for correct cell separation at high temperatures.</title>
        <authorList>
            <person name="Grandin N."/>
            <person name="Charbonneau M."/>
        </authorList>
    </citation>
    <scope>NUCLEOTIDE SEQUENCE [GENOMIC DNA]</scope>
</reference>
<reference key="2">
    <citation type="journal article" date="2002" name="Nature">
        <title>The genome sequence of Schizosaccharomyces pombe.</title>
        <authorList>
            <person name="Wood V."/>
            <person name="Gwilliam R."/>
            <person name="Rajandream M.A."/>
            <person name="Lyne M.H."/>
            <person name="Lyne R."/>
            <person name="Stewart A."/>
            <person name="Sgouros J.G."/>
            <person name="Peat N."/>
            <person name="Hayles J."/>
            <person name="Baker S.G."/>
            <person name="Basham D."/>
            <person name="Bowman S."/>
            <person name="Brooks K."/>
            <person name="Brown D."/>
            <person name="Brown S."/>
            <person name="Chillingworth T."/>
            <person name="Churcher C.M."/>
            <person name="Collins M."/>
            <person name="Connor R."/>
            <person name="Cronin A."/>
            <person name="Davis P."/>
            <person name="Feltwell T."/>
            <person name="Fraser A."/>
            <person name="Gentles S."/>
            <person name="Goble A."/>
            <person name="Hamlin N."/>
            <person name="Harris D.E."/>
            <person name="Hidalgo J."/>
            <person name="Hodgson G."/>
            <person name="Holroyd S."/>
            <person name="Hornsby T."/>
            <person name="Howarth S."/>
            <person name="Huckle E.J."/>
            <person name="Hunt S."/>
            <person name="Jagels K."/>
            <person name="James K.D."/>
            <person name="Jones L."/>
            <person name="Jones M."/>
            <person name="Leather S."/>
            <person name="McDonald S."/>
            <person name="McLean J."/>
            <person name="Mooney P."/>
            <person name="Moule S."/>
            <person name="Mungall K.L."/>
            <person name="Murphy L.D."/>
            <person name="Niblett D."/>
            <person name="Odell C."/>
            <person name="Oliver K."/>
            <person name="O'Neil S."/>
            <person name="Pearson D."/>
            <person name="Quail M.A."/>
            <person name="Rabbinowitsch E."/>
            <person name="Rutherford K.M."/>
            <person name="Rutter S."/>
            <person name="Saunders D."/>
            <person name="Seeger K."/>
            <person name="Sharp S."/>
            <person name="Skelton J."/>
            <person name="Simmonds M.N."/>
            <person name="Squares R."/>
            <person name="Squares S."/>
            <person name="Stevens K."/>
            <person name="Taylor K."/>
            <person name="Taylor R.G."/>
            <person name="Tivey A."/>
            <person name="Walsh S.V."/>
            <person name="Warren T."/>
            <person name="Whitehead S."/>
            <person name="Woodward J.R."/>
            <person name="Volckaert G."/>
            <person name="Aert R."/>
            <person name="Robben J."/>
            <person name="Grymonprez B."/>
            <person name="Weltjens I."/>
            <person name="Vanstreels E."/>
            <person name="Rieger M."/>
            <person name="Schaefer M."/>
            <person name="Mueller-Auer S."/>
            <person name="Gabel C."/>
            <person name="Fuchs M."/>
            <person name="Duesterhoeft A."/>
            <person name="Fritzc C."/>
            <person name="Holzer E."/>
            <person name="Moestl D."/>
            <person name="Hilbert H."/>
            <person name="Borzym K."/>
            <person name="Langer I."/>
            <person name="Beck A."/>
            <person name="Lehrach H."/>
            <person name="Reinhardt R."/>
            <person name="Pohl T.M."/>
            <person name="Eger P."/>
            <person name="Zimmermann W."/>
            <person name="Wedler H."/>
            <person name="Wambutt R."/>
            <person name="Purnelle B."/>
            <person name="Goffeau A."/>
            <person name="Cadieu E."/>
            <person name="Dreano S."/>
            <person name="Gloux S."/>
            <person name="Lelaure V."/>
            <person name="Mottier S."/>
            <person name="Galibert F."/>
            <person name="Aves S.J."/>
            <person name="Xiang Z."/>
            <person name="Hunt C."/>
            <person name="Moore K."/>
            <person name="Hurst S.M."/>
            <person name="Lucas M."/>
            <person name="Rochet M."/>
            <person name="Gaillardin C."/>
            <person name="Tallada V.A."/>
            <person name="Garzon A."/>
            <person name="Thode G."/>
            <person name="Daga R.R."/>
            <person name="Cruzado L."/>
            <person name="Jimenez J."/>
            <person name="Sanchez M."/>
            <person name="del Rey F."/>
            <person name="Benito J."/>
            <person name="Dominguez A."/>
            <person name="Revuelta J.L."/>
            <person name="Moreno S."/>
            <person name="Armstrong J."/>
            <person name="Forsburg S.L."/>
            <person name="Cerutti L."/>
            <person name="Lowe T."/>
            <person name="McCombie W.R."/>
            <person name="Paulsen I."/>
            <person name="Potashkin J."/>
            <person name="Shpakovski G.V."/>
            <person name="Ussery D."/>
            <person name="Barrell B.G."/>
            <person name="Nurse P."/>
        </authorList>
    </citation>
    <scope>NUCLEOTIDE SEQUENCE [LARGE SCALE GENOMIC DNA]</scope>
    <source>
        <strain>972 / ATCC 24843</strain>
    </source>
</reference>
<reference key="3">
    <citation type="journal article" date="2000" name="Genes Cells">
        <title>Large-scale screening of intracellular protein localization in living fission yeast cells by the use of a GFP-fusion genomic DNA library.</title>
        <authorList>
            <person name="Ding D.-Q."/>
            <person name="Tomita Y."/>
            <person name="Yamamoto A."/>
            <person name="Chikashige Y."/>
            <person name="Haraguchi T."/>
            <person name="Hiraoka Y."/>
        </authorList>
    </citation>
    <scope>NUCLEOTIDE SEQUENCE [LARGE SCALE GENOMIC DNA] OF 203-442</scope>
    <scope>SUBCELLULAR LOCATION</scope>
    <source>
        <strain>ATCC 38364 / 968</strain>
    </source>
</reference>
<reference key="4">
    <citation type="journal article" date="2006" name="Nat. Biotechnol.">
        <title>ORFeome cloning and global analysis of protein localization in the fission yeast Schizosaccharomyces pombe.</title>
        <authorList>
            <person name="Matsuyama A."/>
            <person name="Arai R."/>
            <person name="Yashiroda Y."/>
            <person name="Shirai A."/>
            <person name="Kamata A."/>
            <person name="Sekido S."/>
            <person name="Kobayashi Y."/>
            <person name="Hashimoto A."/>
            <person name="Hamamoto M."/>
            <person name="Hiraoka Y."/>
            <person name="Horinouchi S."/>
            <person name="Yoshida M."/>
        </authorList>
    </citation>
    <scope>SUBCELLULAR LOCATION [LARGE SCALE ANALYSIS]</scope>
</reference>
<reference key="5">
    <citation type="journal article" date="2008" name="J. Proteome Res.">
        <title>Phosphoproteome analysis of fission yeast.</title>
        <authorList>
            <person name="Wilson-Grady J.T."/>
            <person name="Villen J."/>
            <person name="Gygi S.P."/>
        </authorList>
    </citation>
    <scope>PHOSPHORYLATION [LARGE SCALE ANALYSIS] AT SER-438</scope>
    <scope>IDENTIFICATION BY MASS SPECTROMETRY</scope>
</reference>
<name>MAC1_SCHPO</name>
<gene>
    <name type="primary">mac1</name>
    <name type="ORF">SPAC13G7.04c</name>
</gene>
<proteinExistence type="evidence at protein level"/>
<dbReference type="EMBL" id="AJ441114">
    <property type="protein sequence ID" value="CAD29592.1"/>
    <property type="molecule type" value="Genomic_DNA"/>
</dbReference>
<dbReference type="EMBL" id="CU329670">
    <property type="protein sequence ID" value="CAA93592.1"/>
    <property type="molecule type" value="Genomic_DNA"/>
</dbReference>
<dbReference type="EMBL" id="AB027894">
    <property type="protein sequence ID" value="BAA87198.1"/>
    <property type="molecule type" value="Genomic_DNA"/>
</dbReference>
<dbReference type="PIR" id="S67433">
    <property type="entry name" value="S67433"/>
</dbReference>
<dbReference type="RefSeq" id="NP_593706.1">
    <property type="nucleotide sequence ID" value="NM_001019137.2"/>
</dbReference>
<dbReference type="SMR" id="Q10268"/>
<dbReference type="BioGRID" id="279309">
    <property type="interactions" value="19"/>
</dbReference>
<dbReference type="FunCoup" id="Q10268">
    <property type="interactions" value="1"/>
</dbReference>
<dbReference type="STRING" id="284812.Q10268"/>
<dbReference type="GlyCosmos" id="Q10268">
    <property type="glycosylation" value="26 sites, No reported glycans"/>
</dbReference>
<dbReference type="iPTMnet" id="Q10268"/>
<dbReference type="PaxDb" id="4896-SPAC13G7.04c.1"/>
<dbReference type="EnsemblFungi" id="SPAC13G7.04c.1">
    <property type="protein sequence ID" value="SPAC13G7.04c.1:pep"/>
    <property type="gene ID" value="SPAC13G7.04c"/>
</dbReference>
<dbReference type="GeneID" id="2542863"/>
<dbReference type="KEGG" id="spo:2542863"/>
<dbReference type="PomBase" id="SPAC13G7.04c">
    <property type="gene designation" value="mac1"/>
</dbReference>
<dbReference type="VEuPathDB" id="FungiDB:SPAC13G7.04c"/>
<dbReference type="eggNOG" id="ENOG502RYG1">
    <property type="taxonomic scope" value="Eukaryota"/>
</dbReference>
<dbReference type="HOGENOM" id="CLU_021379_0_0_1"/>
<dbReference type="InParanoid" id="Q10268"/>
<dbReference type="OMA" id="LPHNTWQ"/>
<dbReference type="PRO" id="PR:Q10268"/>
<dbReference type="Proteomes" id="UP000002485">
    <property type="component" value="Chromosome I"/>
</dbReference>
<dbReference type="GO" id="GO:0032153">
    <property type="term" value="C:cell division site"/>
    <property type="evidence" value="ECO:0007005"/>
    <property type="project" value="PomBase"/>
</dbReference>
<dbReference type="GO" id="GO:0051286">
    <property type="term" value="C:cell tip"/>
    <property type="evidence" value="ECO:0007005"/>
    <property type="project" value="PomBase"/>
</dbReference>
<dbReference type="GO" id="GO:0035838">
    <property type="term" value="C:growing cell tip"/>
    <property type="evidence" value="ECO:0000318"/>
    <property type="project" value="GO_Central"/>
</dbReference>
<dbReference type="GO" id="GO:0035839">
    <property type="term" value="C:non-growing cell tip"/>
    <property type="evidence" value="ECO:0000315"/>
    <property type="project" value="PomBase"/>
</dbReference>
<dbReference type="GO" id="GO:0035840">
    <property type="term" value="C:old growing cell tip"/>
    <property type="evidence" value="ECO:0000315"/>
    <property type="project" value="PomBase"/>
</dbReference>
<dbReference type="GO" id="GO:0005886">
    <property type="term" value="C:plasma membrane"/>
    <property type="evidence" value="ECO:0000315"/>
    <property type="project" value="PomBase"/>
</dbReference>
<dbReference type="GO" id="GO:0051301">
    <property type="term" value="P:cell division"/>
    <property type="evidence" value="ECO:0007669"/>
    <property type="project" value="UniProtKB-KW"/>
</dbReference>
<dbReference type="GO" id="GO:0006887">
    <property type="term" value="P:exocytosis"/>
    <property type="evidence" value="ECO:0000250"/>
    <property type="project" value="PomBase"/>
</dbReference>
<dbReference type="InterPro" id="IPR051380">
    <property type="entry name" value="pH-response_reg_palI/RIM9"/>
</dbReference>
<dbReference type="InterPro" id="IPR009571">
    <property type="entry name" value="SUR7/Rim9-like_fungi"/>
</dbReference>
<dbReference type="PANTHER" id="PTHR28013">
    <property type="entry name" value="PROTEIN DCV1-RELATED"/>
    <property type="match status" value="1"/>
</dbReference>
<dbReference type="PANTHER" id="PTHR28013:SF3">
    <property type="entry name" value="PROTEIN DCV1-RELATED"/>
    <property type="match status" value="1"/>
</dbReference>
<dbReference type="Pfam" id="PF06687">
    <property type="entry name" value="SUR7"/>
    <property type="match status" value="1"/>
</dbReference>
<feature type="signal peptide" evidence="1">
    <location>
        <begin position="1"/>
        <end position="24"/>
    </location>
</feature>
<feature type="chain" id="PRO_0000021632" description="Membrane-anchored protein 1">
    <location>
        <begin position="25"/>
        <end position="756"/>
    </location>
</feature>
<feature type="transmembrane region" description="Helical" evidence="1">
    <location>
        <begin position="91"/>
        <end position="111"/>
    </location>
</feature>
<feature type="transmembrane region" description="Helical" evidence="1">
    <location>
        <begin position="120"/>
        <end position="140"/>
    </location>
</feature>
<feature type="transmembrane region" description="Helical" evidence="1">
    <location>
        <begin position="148"/>
        <end position="168"/>
    </location>
</feature>
<feature type="region of interest" description="Disordered" evidence="2">
    <location>
        <begin position="281"/>
        <end position="328"/>
    </location>
</feature>
<feature type="region of interest" description="Disordered" evidence="2">
    <location>
        <begin position="427"/>
        <end position="453"/>
    </location>
</feature>
<feature type="region of interest" description="Disordered" evidence="2">
    <location>
        <begin position="482"/>
        <end position="650"/>
    </location>
</feature>
<feature type="region of interest" description="Disordered" evidence="2">
    <location>
        <begin position="686"/>
        <end position="713"/>
    </location>
</feature>
<feature type="region of interest" description="Disordered" evidence="2">
    <location>
        <begin position="735"/>
        <end position="756"/>
    </location>
</feature>
<feature type="compositionally biased region" description="Low complexity" evidence="2">
    <location>
        <begin position="289"/>
        <end position="300"/>
    </location>
</feature>
<feature type="compositionally biased region" description="Polar residues" evidence="2">
    <location>
        <begin position="433"/>
        <end position="447"/>
    </location>
</feature>
<feature type="compositionally biased region" description="Low complexity" evidence="2">
    <location>
        <begin position="485"/>
        <end position="520"/>
    </location>
</feature>
<feature type="compositionally biased region" description="Polar residues" evidence="2">
    <location>
        <begin position="593"/>
        <end position="605"/>
    </location>
</feature>
<feature type="compositionally biased region" description="Polar residues" evidence="2">
    <location>
        <begin position="617"/>
        <end position="629"/>
    </location>
</feature>
<feature type="compositionally biased region" description="Polar residues" evidence="2">
    <location>
        <begin position="640"/>
        <end position="650"/>
    </location>
</feature>
<feature type="compositionally biased region" description="Polar residues" evidence="2">
    <location>
        <begin position="686"/>
        <end position="697"/>
    </location>
</feature>
<feature type="modified residue" description="Phosphoserine" evidence="3">
    <location>
        <position position="438"/>
    </location>
</feature>
<feature type="glycosylation site" description="N-linked (GlcNAc...) asparagine" evidence="1">
    <location>
        <position position="52"/>
    </location>
</feature>
<feature type="glycosylation site" description="N-linked (GlcNAc...) asparagine" evidence="1">
    <location>
        <position position="64"/>
    </location>
</feature>
<feature type="glycosylation site" description="N-linked (GlcNAc...) asparagine" evidence="1">
    <location>
        <position position="190"/>
    </location>
</feature>
<feature type="glycosylation site" description="N-linked (GlcNAc...) asparagine" evidence="1">
    <location>
        <position position="396"/>
    </location>
</feature>
<feature type="glycosylation site" description="N-linked (GlcNAc...) asparagine" evidence="1">
    <location>
        <position position="407"/>
    </location>
</feature>
<feature type="glycosylation site" description="N-linked (GlcNAc...) asparagine" evidence="1">
    <location>
        <position position="459"/>
    </location>
</feature>
<feature type="glycosylation site" description="N-linked (GlcNAc...) asparagine" evidence="1">
    <location>
        <position position="470"/>
    </location>
</feature>
<feature type="glycosylation site" description="N-linked (GlcNAc...) asparagine" evidence="1">
    <location>
        <position position="471"/>
    </location>
</feature>
<feature type="glycosylation site" description="N-linked (GlcNAc...) asparagine" evidence="1">
    <location>
        <position position="496"/>
    </location>
</feature>
<feature type="glycosylation site" description="N-linked (GlcNAc...) asparagine" evidence="1">
    <location>
        <position position="497"/>
    </location>
</feature>
<feature type="glycosylation site" description="N-linked (GlcNAc...) asparagine" evidence="1">
    <location>
        <position position="521"/>
    </location>
</feature>
<feature type="glycosylation site" description="N-linked (GlcNAc...) asparagine" evidence="1">
    <location>
        <position position="522"/>
    </location>
</feature>
<feature type="glycosylation site" description="N-linked (GlcNAc...) asparagine" evidence="1">
    <location>
        <position position="547"/>
    </location>
</feature>
<feature type="glycosylation site" description="N-linked (GlcNAc...) asparagine" evidence="1">
    <location>
        <position position="548"/>
    </location>
</feature>
<feature type="glycosylation site" description="N-linked (GlcNAc...) asparagine" evidence="1">
    <location>
        <position position="573"/>
    </location>
</feature>
<feature type="glycosylation site" description="N-linked (GlcNAc...) asparagine" evidence="1">
    <location>
        <position position="574"/>
    </location>
</feature>
<feature type="glycosylation site" description="N-linked (GlcNAc...) asparagine" evidence="1">
    <location>
        <position position="594"/>
    </location>
</feature>
<feature type="glycosylation site" description="N-linked (GlcNAc...) asparagine" evidence="1">
    <location>
        <position position="598"/>
    </location>
</feature>
<feature type="glycosylation site" description="N-linked (GlcNAc...) asparagine" evidence="1">
    <location>
        <position position="599"/>
    </location>
</feature>
<feature type="glycosylation site" description="N-linked (GlcNAc...) asparagine" evidence="1">
    <location>
        <position position="618"/>
    </location>
</feature>
<feature type="glycosylation site" description="N-linked (GlcNAc...) asparagine" evidence="1">
    <location>
        <position position="623"/>
    </location>
</feature>
<feature type="glycosylation site" description="N-linked (GlcNAc...) asparagine" evidence="1">
    <location>
        <position position="649"/>
    </location>
</feature>
<feature type="glycosylation site" description="N-linked (GlcNAc...) asparagine" evidence="1">
    <location>
        <position position="664"/>
    </location>
</feature>
<feature type="glycosylation site" description="N-linked (GlcNAc...) asparagine" evidence="1">
    <location>
        <position position="676"/>
    </location>
</feature>
<feature type="glycosylation site" description="N-linked (GlcNAc...) asparagine" evidence="1">
    <location>
        <position position="685"/>
    </location>
</feature>
<feature type="glycosylation site" description="N-linked (GlcNAc...) asparagine" evidence="1">
    <location>
        <position position="715"/>
    </location>
</feature>
<sequence>MIRNTLAFLAILFLLIPTALLIIGSVSVPSTRMTLAKVEGTEFGIFGTCTGNGTDCTETSFGYNASSSLIDDFYYKGDKRLVLSKVLITHIISAFLSFLSAIFVFFSIFLVNQAVNIINIIVVFITTLLTCLAFAIELVLFLPHNTWQSYVTAGAIGSDLIAILALCLRSVSISRIGQKSARLEHVDTMNSSYSSYKTDVKYPLALDDKLSSVPTLPKFHDALTSTSEFGPPSDSGDTVGTTQYPGDIKYATGYESTVASPVPSRVAKLSSRDTPSIIADYDEFRKSESSPSRSSVLSTSKPEVHETEGYCPHKTGNRPGFPSLNIPRTRPTTAGIANTQFDLEPYRNRQAGSISSEGTDSRFFDVENQVSVAQTPSVKPEMFPKTARPFAAIHANASSTQLRNTENITHPGIPNHFAKTTSSVFDEPPATRMPQTRSPVNDHSSFPSDLPIKGEMSTNMTGAPRVGSRNNSSNDLHAQAGMLKNVGNGPRNAPRNNSSNNLHAQGGMPMNMRGPRGAPRNNSSGDLHIQSGMPMNGRNGPRDTSRNNSSSDLYAQSGMHPNMNNGHRGAPRNNSSNDLHAHGGMPVNMRGPRNTSRNNSSSEFNAQIPMNLRNGPRNASRSNSSTDLFGQSGIPGNSRGMPTSPNSRNNSALDLSMHGIPLANNSRQFKRPSYGNMSRPSFELNGSRNPSHGSLNTAHAGMGYGPRSMMRDPQNLSNVPPVSNTLDQLSGNADFELPVRGNRNNRRGPGGNRMIR</sequence>
<evidence type="ECO:0000255" key="1"/>
<evidence type="ECO:0000256" key="2">
    <source>
        <dbReference type="SAM" id="MobiDB-lite"/>
    </source>
</evidence>
<evidence type="ECO:0000269" key="3">
    <source>
    </source>
</evidence>
<evidence type="ECO:0000305" key="4"/>
<comment type="function">
    <text>Required for correct cell separation at high temperatures.</text>
</comment>
<comment type="subcellular location">
    <subcellularLocation>
        <location>Cell membrane</location>
        <topology>Multi-pass membrane protein</topology>
    </subcellularLocation>
    <subcellularLocation>
        <location>Cell tip</location>
    </subcellularLocation>
</comment>
<comment type="similarity">
    <text evidence="4">To yeast YOL019W and YMR063W.</text>
</comment>